<proteinExistence type="inferred from homology"/>
<gene>
    <name evidence="1" type="primary">pcrB</name>
    <name type="ordered locus">OB0758</name>
</gene>
<keyword id="KW-0444">Lipid biosynthesis</keyword>
<keyword id="KW-0443">Lipid metabolism</keyword>
<keyword id="KW-0460">Magnesium</keyword>
<keyword id="KW-0479">Metal-binding</keyword>
<keyword id="KW-0594">Phospholipid biosynthesis</keyword>
<keyword id="KW-1208">Phospholipid metabolism</keyword>
<keyword id="KW-1185">Reference proteome</keyword>
<keyword id="KW-0808">Transferase</keyword>
<protein>
    <recommendedName>
        <fullName evidence="1">Heptaprenylglyceryl phosphate synthase</fullName>
        <shortName evidence="1">HepGP synthase</shortName>
        <ecNumber evidence="1">2.5.1.n9</ecNumber>
    </recommendedName>
    <alternativeName>
        <fullName evidence="1">Glycerol-1-phosphate heptaprenyltransferase</fullName>
    </alternativeName>
</protein>
<organism>
    <name type="scientific">Oceanobacillus iheyensis (strain DSM 14371 / CIP 107618 / JCM 11309 / KCTC 3954 / HTE831)</name>
    <dbReference type="NCBI Taxonomy" id="221109"/>
    <lineage>
        <taxon>Bacteria</taxon>
        <taxon>Bacillati</taxon>
        <taxon>Bacillota</taxon>
        <taxon>Bacilli</taxon>
        <taxon>Bacillales</taxon>
        <taxon>Bacillaceae</taxon>
        <taxon>Oceanobacillus</taxon>
    </lineage>
</organism>
<accession>Q8ES84</accession>
<name>PCRB_OCEIH</name>
<reference key="1">
    <citation type="journal article" date="2002" name="Nucleic Acids Res.">
        <title>Genome sequence of Oceanobacillus iheyensis isolated from the Iheya Ridge and its unexpected adaptive capabilities to extreme environments.</title>
        <authorList>
            <person name="Takami H."/>
            <person name="Takaki Y."/>
            <person name="Uchiyama I."/>
        </authorList>
    </citation>
    <scope>NUCLEOTIDE SEQUENCE [LARGE SCALE GENOMIC DNA]</scope>
    <source>
        <strain>DSM 14371 / CIP 107618 / JCM 11309 / KCTC 3954 / HTE831</strain>
    </source>
</reference>
<comment type="function">
    <text evidence="1">Prenyltransferase that catalyzes in vivo the transfer of the heptaprenyl moiety of heptaprenyl pyrophosphate (HepPP; 35 carbon atoms) to the C3 hydroxyl of sn-glycerol-1-phosphate (G1P), producing heptaprenylglyceryl phosphate (HepGP). This reaction is an ether-bond-formation step in the biosynthesis of archaea-type G1P-based membrane lipids found in Bacillales.</text>
</comment>
<comment type="catalytic activity">
    <reaction evidence="1">
        <text>sn-glycerol 1-phosphate + all-trans-heptaprenyl diphosphate = 3-heptaprenyl-sn-glycero-1-phosphate + diphosphate</text>
        <dbReference type="Rhea" id="RHEA:33495"/>
        <dbReference type="ChEBI" id="CHEBI:33019"/>
        <dbReference type="ChEBI" id="CHEBI:57685"/>
        <dbReference type="ChEBI" id="CHEBI:58206"/>
        <dbReference type="ChEBI" id="CHEBI:64781"/>
        <dbReference type="EC" id="2.5.1.n9"/>
    </reaction>
</comment>
<comment type="cofactor">
    <cofactor evidence="1">
        <name>Mg(2+)</name>
        <dbReference type="ChEBI" id="CHEBI:18420"/>
    </cofactor>
</comment>
<comment type="pathway">
    <text evidence="1">Membrane lipid metabolism; glycerophospholipid metabolism.</text>
</comment>
<comment type="subunit">
    <text evidence="1">Homodimer.</text>
</comment>
<comment type="similarity">
    <text evidence="1">Belongs to the GGGP/HepGP synthase family. Group I subfamily.</text>
</comment>
<feature type="chain" id="PRO_0000138716" description="Heptaprenylglyceryl phosphate synthase">
    <location>
        <begin position="1"/>
        <end position="229"/>
    </location>
</feature>
<feature type="binding site" evidence="1">
    <location>
        <position position="12"/>
    </location>
    <ligand>
        <name>sn-glycerol 1-phosphate</name>
        <dbReference type="ChEBI" id="CHEBI:57685"/>
    </ligand>
</feature>
<feature type="binding site" evidence="1">
    <location>
        <position position="14"/>
    </location>
    <ligand>
        <name>Mg(2+)</name>
        <dbReference type="ChEBI" id="CHEBI:18420"/>
    </ligand>
</feature>
<feature type="binding site" evidence="1">
    <location>
        <position position="40"/>
    </location>
    <ligand>
        <name>Mg(2+)</name>
        <dbReference type="ChEBI" id="CHEBI:18420"/>
    </ligand>
</feature>
<feature type="binding site" evidence="1">
    <location>
        <begin position="159"/>
        <end position="164"/>
    </location>
    <ligand>
        <name>sn-glycerol 1-phosphate</name>
        <dbReference type="ChEBI" id="CHEBI:57685"/>
    </ligand>
</feature>
<feature type="binding site" evidence="1">
    <location>
        <position position="189"/>
    </location>
    <ligand>
        <name>sn-glycerol 1-phosphate</name>
        <dbReference type="ChEBI" id="CHEBI:57685"/>
    </ligand>
</feature>
<feature type="binding site" evidence="1">
    <location>
        <begin position="209"/>
        <end position="210"/>
    </location>
    <ligand>
        <name>sn-glycerol 1-phosphate</name>
        <dbReference type="ChEBI" id="CHEBI:57685"/>
    </ligand>
</feature>
<sequence length="229" mass="26147">MKNINEWHHIFKLDPAKEISDEHLDQICESGTDAIIVGGTDNVTLDGVLDLLSRIRRSHMVPVVLEVSEEETLTPGFDYYFVPMVLNSKEKKYMMDIQHKAIKEFIDMMEFAEVYFEGYCILNEDAKAFQYTNCVMPDLDDVKAYAYMAEKVFHLPFFYIEYSGAYGDPTLVKEVKEELQNTQLLYGGGIETTAQAKEMKEYADTIIVGNSIYTNINEALKTVEAVKGN</sequence>
<dbReference type="EC" id="2.5.1.n9" evidence="1"/>
<dbReference type="EMBL" id="BA000028">
    <property type="protein sequence ID" value="BAC12714.1"/>
    <property type="molecule type" value="Genomic_DNA"/>
</dbReference>
<dbReference type="RefSeq" id="WP_011065166.1">
    <property type="nucleotide sequence ID" value="NC_004193.1"/>
</dbReference>
<dbReference type="SMR" id="Q8ES84"/>
<dbReference type="STRING" id="221109.gene:10732979"/>
<dbReference type="KEGG" id="oih:OB0758"/>
<dbReference type="eggNOG" id="COG1646">
    <property type="taxonomic scope" value="Bacteria"/>
</dbReference>
<dbReference type="HOGENOM" id="CLU_095211_0_0_9"/>
<dbReference type="OrthoDB" id="2381757at2"/>
<dbReference type="PhylomeDB" id="Q8ES84"/>
<dbReference type="UniPathway" id="UPA00940"/>
<dbReference type="Proteomes" id="UP000000822">
    <property type="component" value="Chromosome"/>
</dbReference>
<dbReference type="GO" id="GO:0120536">
    <property type="term" value="F:heptaprenylglyceryl phosphate synthase activity"/>
    <property type="evidence" value="ECO:0007669"/>
    <property type="project" value="RHEA"/>
</dbReference>
<dbReference type="GO" id="GO:0000287">
    <property type="term" value="F:magnesium ion binding"/>
    <property type="evidence" value="ECO:0007669"/>
    <property type="project" value="UniProtKB-UniRule"/>
</dbReference>
<dbReference type="GO" id="GO:0046474">
    <property type="term" value="P:glycerophospholipid biosynthetic process"/>
    <property type="evidence" value="ECO:0007669"/>
    <property type="project" value="UniProtKB-UniRule"/>
</dbReference>
<dbReference type="CDD" id="cd02812">
    <property type="entry name" value="PcrB_like"/>
    <property type="match status" value="1"/>
</dbReference>
<dbReference type="FunFam" id="3.20.20.390:FF:000001">
    <property type="entry name" value="Heptaprenylglyceryl phosphate synthase"/>
    <property type="match status" value="1"/>
</dbReference>
<dbReference type="Gene3D" id="3.20.20.390">
    <property type="entry name" value="FMN-linked oxidoreductases"/>
    <property type="match status" value="1"/>
</dbReference>
<dbReference type="HAMAP" id="MF_00112">
    <property type="entry name" value="GGGP_HepGP_synthase"/>
    <property type="match status" value="1"/>
</dbReference>
<dbReference type="InterPro" id="IPR039074">
    <property type="entry name" value="GGGP/HepGP_synthase_I"/>
</dbReference>
<dbReference type="InterPro" id="IPR038597">
    <property type="entry name" value="GGGP/HepGP_synthase_sf"/>
</dbReference>
<dbReference type="InterPro" id="IPR008205">
    <property type="entry name" value="GGGP_HepGP_synthase"/>
</dbReference>
<dbReference type="NCBIfam" id="TIGR01768">
    <property type="entry name" value="GGGP-family"/>
    <property type="match status" value="1"/>
</dbReference>
<dbReference type="NCBIfam" id="NF003197">
    <property type="entry name" value="PRK04169.1-1"/>
    <property type="match status" value="1"/>
</dbReference>
<dbReference type="NCBIfam" id="NF003199">
    <property type="entry name" value="PRK04169.1-3"/>
    <property type="match status" value="1"/>
</dbReference>
<dbReference type="PANTHER" id="PTHR40029">
    <property type="match status" value="1"/>
</dbReference>
<dbReference type="PANTHER" id="PTHR40029:SF2">
    <property type="entry name" value="HEPTAPRENYLGLYCERYL PHOSPHATE SYNTHASE"/>
    <property type="match status" value="1"/>
</dbReference>
<dbReference type="Pfam" id="PF01884">
    <property type="entry name" value="PcrB"/>
    <property type="match status" value="1"/>
</dbReference>
<dbReference type="SUPFAM" id="SSF51395">
    <property type="entry name" value="FMN-linked oxidoreductases"/>
    <property type="match status" value="1"/>
</dbReference>
<evidence type="ECO:0000255" key="1">
    <source>
        <dbReference type="HAMAP-Rule" id="MF_00112"/>
    </source>
</evidence>